<keyword id="KW-0067">ATP-binding</keyword>
<keyword id="KW-0963">Cytoplasm</keyword>
<keyword id="KW-0227">DNA damage</keyword>
<keyword id="KW-0233">DNA recombination</keyword>
<keyword id="KW-0234">DNA repair</keyword>
<keyword id="KW-0238">DNA-binding</keyword>
<keyword id="KW-0378">Hydrolase</keyword>
<keyword id="KW-0547">Nucleotide-binding</keyword>
<keyword id="KW-1185">Reference proteome</keyword>
<evidence type="ECO:0000255" key="1">
    <source>
        <dbReference type="HAMAP-Rule" id="MF_00016"/>
    </source>
</evidence>
<dbReference type="EC" id="3.6.4.-" evidence="1"/>
<dbReference type="EMBL" id="CP000633">
    <property type="protein sequence ID" value="ACM37599.1"/>
    <property type="molecule type" value="Genomic_DNA"/>
</dbReference>
<dbReference type="RefSeq" id="WP_015917012.1">
    <property type="nucleotide sequence ID" value="NC_011989.1"/>
</dbReference>
<dbReference type="SMR" id="B9JRX1"/>
<dbReference type="STRING" id="311402.Avi_3609"/>
<dbReference type="GeneID" id="60683150"/>
<dbReference type="KEGG" id="avi:Avi_3609"/>
<dbReference type="eggNOG" id="COG2255">
    <property type="taxonomic scope" value="Bacteria"/>
</dbReference>
<dbReference type="HOGENOM" id="CLU_055599_1_0_5"/>
<dbReference type="Proteomes" id="UP000001596">
    <property type="component" value="Chromosome 1"/>
</dbReference>
<dbReference type="GO" id="GO:0005737">
    <property type="term" value="C:cytoplasm"/>
    <property type="evidence" value="ECO:0007669"/>
    <property type="project" value="UniProtKB-SubCell"/>
</dbReference>
<dbReference type="GO" id="GO:0048476">
    <property type="term" value="C:Holliday junction resolvase complex"/>
    <property type="evidence" value="ECO:0007669"/>
    <property type="project" value="UniProtKB-UniRule"/>
</dbReference>
<dbReference type="GO" id="GO:0005524">
    <property type="term" value="F:ATP binding"/>
    <property type="evidence" value="ECO:0007669"/>
    <property type="project" value="UniProtKB-UniRule"/>
</dbReference>
<dbReference type="GO" id="GO:0016887">
    <property type="term" value="F:ATP hydrolysis activity"/>
    <property type="evidence" value="ECO:0007669"/>
    <property type="project" value="InterPro"/>
</dbReference>
<dbReference type="GO" id="GO:0000400">
    <property type="term" value="F:four-way junction DNA binding"/>
    <property type="evidence" value="ECO:0007669"/>
    <property type="project" value="UniProtKB-UniRule"/>
</dbReference>
<dbReference type="GO" id="GO:0009378">
    <property type="term" value="F:four-way junction helicase activity"/>
    <property type="evidence" value="ECO:0007669"/>
    <property type="project" value="InterPro"/>
</dbReference>
<dbReference type="GO" id="GO:0006310">
    <property type="term" value="P:DNA recombination"/>
    <property type="evidence" value="ECO:0007669"/>
    <property type="project" value="UniProtKB-UniRule"/>
</dbReference>
<dbReference type="GO" id="GO:0006281">
    <property type="term" value="P:DNA repair"/>
    <property type="evidence" value="ECO:0007669"/>
    <property type="project" value="UniProtKB-UniRule"/>
</dbReference>
<dbReference type="CDD" id="cd00009">
    <property type="entry name" value="AAA"/>
    <property type="match status" value="1"/>
</dbReference>
<dbReference type="Gene3D" id="1.10.8.60">
    <property type="match status" value="1"/>
</dbReference>
<dbReference type="Gene3D" id="3.40.50.300">
    <property type="entry name" value="P-loop containing nucleotide triphosphate hydrolases"/>
    <property type="match status" value="1"/>
</dbReference>
<dbReference type="Gene3D" id="1.10.10.10">
    <property type="entry name" value="Winged helix-like DNA-binding domain superfamily/Winged helix DNA-binding domain"/>
    <property type="match status" value="1"/>
</dbReference>
<dbReference type="HAMAP" id="MF_00016">
    <property type="entry name" value="DNA_HJ_migration_RuvB"/>
    <property type="match status" value="1"/>
</dbReference>
<dbReference type="InterPro" id="IPR003593">
    <property type="entry name" value="AAA+_ATPase"/>
</dbReference>
<dbReference type="InterPro" id="IPR041445">
    <property type="entry name" value="AAA_lid_4"/>
</dbReference>
<dbReference type="InterPro" id="IPR000641">
    <property type="entry name" value="CbxX/CfxQ"/>
</dbReference>
<dbReference type="InterPro" id="IPR004605">
    <property type="entry name" value="DNA_helicase_Holl-junc_RuvB"/>
</dbReference>
<dbReference type="InterPro" id="IPR027417">
    <property type="entry name" value="P-loop_NTPase"/>
</dbReference>
<dbReference type="InterPro" id="IPR008824">
    <property type="entry name" value="RuvB-like_N"/>
</dbReference>
<dbReference type="InterPro" id="IPR008823">
    <property type="entry name" value="RuvB_C"/>
</dbReference>
<dbReference type="InterPro" id="IPR036388">
    <property type="entry name" value="WH-like_DNA-bd_sf"/>
</dbReference>
<dbReference type="InterPro" id="IPR036390">
    <property type="entry name" value="WH_DNA-bd_sf"/>
</dbReference>
<dbReference type="NCBIfam" id="NF000868">
    <property type="entry name" value="PRK00080.1"/>
    <property type="match status" value="1"/>
</dbReference>
<dbReference type="NCBIfam" id="TIGR00635">
    <property type="entry name" value="ruvB"/>
    <property type="match status" value="1"/>
</dbReference>
<dbReference type="PANTHER" id="PTHR42848">
    <property type="match status" value="1"/>
</dbReference>
<dbReference type="PANTHER" id="PTHR42848:SF1">
    <property type="entry name" value="HOLLIDAY JUNCTION BRANCH MIGRATION COMPLEX SUBUNIT RUVB"/>
    <property type="match status" value="1"/>
</dbReference>
<dbReference type="Pfam" id="PF17864">
    <property type="entry name" value="AAA_lid_4"/>
    <property type="match status" value="1"/>
</dbReference>
<dbReference type="Pfam" id="PF05491">
    <property type="entry name" value="RuvB_C"/>
    <property type="match status" value="1"/>
</dbReference>
<dbReference type="Pfam" id="PF05496">
    <property type="entry name" value="RuvB_N"/>
    <property type="match status" value="1"/>
</dbReference>
<dbReference type="PRINTS" id="PR00819">
    <property type="entry name" value="CBXCFQXSUPER"/>
</dbReference>
<dbReference type="SMART" id="SM00382">
    <property type="entry name" value="AAA"/>
    <property type="match status" value="1"/>
</dbReference>
<dbReference type="SUPFAM" id="SSF52540">
    <property type="entry name" value="P-loop containing nucleoside triphosphate hydrolases"/>
    <property type="match status" value="1"/>
</dbReference>
<dbReference type="SUPFAM" id="SSF46785">
    <property type="entry name" value="Winged helix' DNA-binding domain"/>
    <property type="match status" value="1"/>
</dbReference>
<reference key="1">
    <citation type="journal article" date="2009" name="J. Bacteriol.">
        <title>Genome sequences of three Agrobacterium biovars help elucidate the evolution of multichromosome genomes in bacteria.</title>
        <authorList>
            <person name="Slater S.C."/>
            <person name="Goldman B.S."/>
            <person name="Goodner B."/>
            <person name="Setubal J.C."/>
            <person name="Farrand S.K."/>
            <person name="Nester E.W."/>
            <person name="Burr T.J."/>
            <person name="Banta L."/>
            <person name="Dickerman A.W."/>
            <person name="Paulsen I."/>
            <person name="Otten L."/>
            <person name="Suen G."/>
            <person name="Welch R."/>
            <person name="Almeida N.F."/>
            <person name="Arnold F."/>
            <person name="Burton O.T."/>
            <person name="Du Z."/>
            <person name="Ewing A."/>
            <person name="Godsy E."/>
            <person name="Heisel S."/>
            <person name="Houmiel K.L."/>
            <person name="Jhaveri J."/>
            <person name="Lu J."/>
            <person name="Miller N.M."/>
            <person name="Norton S."/>
            <person name="Chen Q."/>
            <person name="Phoolcharoen W."/>
            <person name="Ohlin V."/>
            <person name="Ondrusek D."/>
            <person name="Pride N."/>
            <person name="Stricklin S.L."/>
            <person name="Sun J."/>
            <person name="Wheeler C."/>
            <person name="Wilson L."/>
            <person name="Zhu H."/>
            <person name="Wood D.W."/>
        </authorList>
    </citation>
    <scope>NUCLEOTIDE SEQUENCE [LARGE SCALE GENOMIC DNA]</scope>
    <source>
        <strain>ATCC BAA-846 / DSM 112012 / S4</strain>
    </source>
</reference>
<accession>B9JRX1</accession>
<gene>
    <name evidence="1" type="primary">ruvB</name>
    <name type="ordered locus">Avi_3609</name>
</gene>
<feature type="chain" id="PRO_1000195191" description="Holliday junction branch migration complex subunit RuvB">
    <location>
        <begin position="1"/>
        <end position="347"/>
    </location>
</feature>
<feature type="region of interest" description="Large ATPase domain (RuvB-L)" evidence="1">
    <location>
        <begin position="1"/>
        <end position="182"/>
    </location>
</feature>
<feature type="region of interest" description="Small ATPAse domain (RuvB-S)" evidence="1">
    <location>
        <begin position="183"/>
        <end position="253"/>
    </location>
</feature>
<feature type="region of interest" description="Head domain (RuvB-H)" evidence="1">
    <location>
        <begin position="256"/>
        <end position="347"/>
    </location>
</feature>
<feature type="binding site" evidence="1">
    <location>
        <position position="21"/>
    </location>
    <ligand>
        <name>ATP</name>
        <dbReference type="ChEBI" id="CHEBI:30616"/>
    </ligand>
</feature>
<feature type="binding site" evidence="1">
    <location>
        <position position="22"/>
    </location>
    <ligand>
        <name>ATP</name>
        <dbReference type="ChEBI" id="CHEBI:30616"/>
    </ligand>
</feature>
<feature type="binding site" evidence="1">
    <location>
        <position position="63"/>
    </location>
    <ligand>
        <name>ATP</name>
        <dbReference type="ChEBI" id="CHEBI:30616"/>
    </ligand>
</feature>
<feature type="binding site" evidence="1">
    <location>
        <position position="66"/>
    </location>
    <ligand>
        <name>ATP</name>
        <dbReference type="ChEBI" id="CHEBI:30616"/>
    </ligand>
</feature>
<feature type="binding site" evidence="1">
    <location>
        <position position="67"/>
    </location>
    <ligand>
        <name>ATP</name>
        <dbReference type="ChEBI" id="CHEBI:30616"/>
    </ligand>
</feature>
<feature type="binding site" evidence="1">
    <location>
        <position position="67"/>
    </location>
    <ligand>
        <name>Mg(2+)</name>
        <dbReference type="ChEBI" id="CHEBI:18420"/>
    </ligand>
</feature>
<feature type="binding site" evidence="1">
    <location>
        <position position="68"/>
    </location>
    <ligand>
        <name>ATP</name>
        <dbReference type="ChEBI" id="CHEBI:30616"/>
    </ligand>
</feature>
<feature type="binding site" evidence="1">
    <location>
        <begin position="129"/>
        <end position="131"/>
    </location>
    <ligand>
        <name>ATP</name>
        <dbReference type="ChEBI" id="CHEBI:30616"/>
    </ligand>
</feature>
<feature type="binding site" evidence="1">
    <location>
        <position position="172"/>
    </location>
    <ligand>
        <name>ATP</name>
        <dbReference type="ChEBI" id="CHEBI:30616"/>
    </ligand>
</feature>
<feature type="binding site" evidence="1">
    <location>
        <position position="182"/>
    </location>
    <ligand>
        <name>ATP</name>
        <dbReference type="ChEBI" id="CHEBI:30616"/>
    </ligand>
</feature>
<feature type="binding site" evidence="1">
    <location>
        <position position="219"/>
    </location>
    <ligand>
        <name>ATP</name>
        <dbReference type="ChEBI" id="CHEBI:30616"/>
    </ligand>
</feature>
<feature type="binding site" evidence="1">
    <location>
        <position position="292"/>
    </location>
    <ligand>
        <name>DNA</name>
        <dbReference type="ChEBI" id="CHEBI:16991"/>
    </ligand>
</feature>
<feature type="binding site" evidence="1">
    <location>
        <position position="311"/>
    </location>
    <ligand>
        <name>DNA</name>
        <dbReference type="ChEBI" id="CHEBI:16991"/>
    </ligand>
</feature>
<feature type="binding site" evidence="1">
    <location>
        <position position="316"/>
    </location>
    <ligand>
        <name>DNA</name>
        <dbReference type="ChEBI" id="CHEBI:16991"/>
    </ligand>
</feature>
<organism>
    <name type="scientific">Allorhizobium ampelinum (strain ATCC BAA-846 / DSM 112012 / S4)</name>
    <name type="common">Agrobacterium vitis (strain S4)</name>
    <dbReference type="NCBI Taxonomy" id="311402"/>
    <lineage>
        <taxon>Bacteria</taxon>
        <taxon>Pseudomonadati</taxon>
        <taxon>Pseudomonadota</taxon>
        <taxon>Alphaproteobacteria</taxon>
        <taxon>Hyphomicrobiales</taxon>
        <taxon>Rhizobiaceae</taxon>
        <taxon>Rhizobium/Agrobacterium group</taxon>
        <taxon>Allorhizobium</taxon>
        <taxon>Allorhizobium ampelinum</taxon>
    </lineage>
</organism>
<comment type="function">
    <text evidence="1">The RuvA-RuvB-RuvC complex processes Holliday junction (HJ) DNA during genetic recombination and DNA repair, while the RuvA-RuvB complex plays an important role in the rescue of blocked DNA replication forks via replication fork reversal (RFR). RuvA specifically binds to HJ cruciform DNA, conferring on it an open structure. The RuvB hexamer acts as an ATP-dependent pump, pulling dsDNA into and through the RuvAB complex. RuvB forms 2 homohexamers on either side of HJ DNA bound by 1 or 2 RuvA tetramers; 4 subunits per hexamer contact DNA at a time. Coordinated motions by a converter formed by DNA-disengaged RuvB subunits stimulates ATP hydrolysis and nucleotide exchange. Immobilization of the converter enables RuvB to convert the ATP-contained energy into a lever motion, pulling 2 nucleotides of DNA out of the RuvA tetramer per ATP hydrolyzed, thus driving DNA branch migration. The RuvB motors rotate together with the DNA substrate, which together with the progressing nucleotide cycle form the mechanistic basis for DNA recombination by continuous HJ branch migration. Branch migration allows RuvC to scan DNA until it finds its consensus sequence, where it cleaves and resolves cruciform DNA.</text>
</comment>
<comment type="catalytic activity">
    <reaction evidence="1">
        <text>ATP + H2O = ADP + phosphate + H(+)</text>
        <dbReference type="Rhea" id="RHEA:13065"/>
        <dbReference type="ChEBI" id="CHEBI:15377"/>
        <dbReference type="ChEBI" id="CHEBI:15378"/>
        <dbReference type="ChEBI" id="CHEBI:30616"/>
        <dbReference type="ChEBI" id="CHEBI:43474"/>
        <dbReference type="ChEBI" id="CHEBI:456216"/>
    </reaction>
</comment>
<comment type="subunit">
    <text evidence="1">Homohexamer. Forms an RuvA(8)-RuvB(12)-Holliday junction (HJ) complex. HJ DNA is sandwiched between 2 RuvA tetramers; dsDNA enters through RuvA and exits via RuvB. An RuvB hexamer assembles on each DNA strand where it exits the tetramer. Each RuvB hexamer is contacted by two RuvA subunits (via domain III) on 2 adjacent RuvB subunits; this complex drives branch migration. In the full resolvosome a probable DNA-RuvA(4)-RuvB(12)-RuvC(2) complex forms which resolves the HJ.</text>
</comment>
<comment type="subcellular location">
    <subcellularLocation>
        <location evidence="1">Cytoplasm</location>
    </subcellularLocation>
</comment>
<comment type="domain">
    <text evidence="1">Has 3 domains, the large (RuvB-L) and small ATPase (RuvB-S) domains and the C-terminal head (RuvB-H) domain. The head domain binds DNA, while the ATPase domains jointly bind ATP, ADP or are empty depending on the state of the subunit in the translocation cycle. During a single DNA translocation step the structure of each domain remains the same, but their relative positions change.</text>
</comment>
<comment type="similarity">
    <text evidence="1">Belongs to the RuvB family.</text>
</comment>
<name>RUVB_ALLAM</name>
<sequence length="347" mass="38132">MSAQNPVLTPEKRGEDVDSALRPQTLDDFTGQAEARANLKIFIEAAKNRGEALDHVLFVGPPGLGKTTLAQIMAKELGVNFRSTSGPVIAKAGDLAALLTNLEERDVLFIDEIHRLSPAVEEILYPAMEDFQLDLIIGEGPAARSVKIDLSKFTLVAATTRLGLLTTPLRDRFGIPVRLSFYTVEELELIVRRGARLMGLGMTDDGAREIARRARGTPRIAGRLLRRVRDFAEVARAPAVTREIADEALTRLLVDNMGLDQLDTRYLTMIAVNFGGGPVGIETIAAGLSEPRDAIEDIIEPYMIQQGFIQRTPRGRVLTAIAWKHLGLMPPKDMEAAQFRLTLEDDD</sequence>
<protein>
    <recommendedName>
        <fullName evidence="1">Holliday junction branch migration complex subunit RuvB</fullName>
        <ecNumber evidence="1">3.6.4.-</ecNumber>
    </recommendedName>
</protein>
<proteinExistence type="inferred from homology"/>